<organism>
    <name type="scientific">Pseudomonas aeruginosa (strain ATCC 15692 / DSM 22644 / CIP 104116 / JCM 14847 / LMG 12228 / 1C / PRS 101 / PAO1)</name>
    <dbReference type="NCBI Taxonomy" id="208964"/>
    <lineage>
        <taxon>Bacteria</taxon>
        <taxon>Pseudomonadati</taxon>
        <taxon>Pseudomonadota</taxon>
        <taxon>Gammaproteobacteria</taxon>
        <taxon>Pseudomonadales</taxon>
        <taxon>Pseudomonadaceae</taxon>
        <taxon>Pseudomonas</taxon>
    </lineage>
</organism>
<feature type="chain" id="PRO_0000458260" description="Dihydroneopterin triphosphate 2'-epimerase">
    <location>
        <begin position="1"/>
        <end position="123"/>
    </location>
</feature>
<feature type="strand" evidence="8">
    <location>
        <begin position="8"/>
        <end position="22"/>
    </location>
</feature>
<feature type="helix" evidence="8">
    <location>
        <begin position="26"/>
        <end position="30"/>
    </location>
</feature>
<feature type="strand" evidence="8">
    <location>
        <begin position="33"/>
        <end position="42"/>
    </location>
</feature>
<feature type="helix" evidence="8">
    <location>
        <begin position="59"/>
        <end position="72"/>
    </location>
</feature>
<feature type="strand" evidence="8">
    <location>
        <begin position="74"/>
        <end position="77"/>
    </location>
</feature>
<feature type="helix" evidence="8">
    <location>
        <begin position="79"/>
        <end position="92"/>
    </location>
</feature>
<feature type="strand" evidence="8">
    <location>
        <begin position="97"/>
        <end position="106"/>
    </location>
</feature>
<feature type="strand" evidence="8">
    <location>
        <begin position="113"/>
        <end position="121"/>
    </location>
</feature>
<gene>
    <name evidence="4" type="primary">folX</name>
    <name evidence="6" type="ordered locus">PA3439</name>
</gene>
<comment type="function">
    <text evidence="1 2">Catalyzes the epimerization of carbon 2' of the side chain of 7,8-dihydroneopterin triphosphate (H2NTP) to form 7,8-dihydromonapterin triphosphate (H2MTP) (By similarity). Is required for tetrahydromonapterin biosynthesis (PubMed:19897652).</text>
</comment>
<comment type="catalytic activity">
    <reaction evidence="1">
        <text>7,8-dihydroneopterin 3'-triphosphate = 7,8-dihydromonapterin 3'-triphosphate</text>
        <dbReference type="Rhea" id="RHEA:28346"/>
        <dbReference type="ChEBI" id="CHEBI:58462"/>
        <dbReference type="ChEBI" id="CHEBI:61186"/>
        <dbReference type="EC" id="5.1.99.7"/>
    </reaction>
</comment>
<comment type="subunit">
    <text evidence="3">Homooctamer (PubMed:22575651). Dimer of tetramers (PubMed:22575651).</text>
</comment>
<comment type="disruption phenotype">
    <text evidence="2">Deletion of the gene abolishes intra- and extracellular monapterin production.</text>
</comment>
<comment type="similarity">
    <text evidence="5">Belongs to the DHNA family.</text>
</comment>
<accession>Q9HYG7</accession>
<sequence>MPRLEPGMARIRVKDLRLRTFIGIKEEEILNKQDVLINLTILYPAADAVEVNDIEHALNYRTITKAIIRHVEENRFALLERMTQEILDLVMENPAVRYAEVEVDKPHALRFAESVSITLAGHR</sequence>
<evidence type="ECO:0000250" key="1">
    <source>
        <dbReference type="UniProtKB" id="P0AC19"/>
    </source>
</evidence>
<evidence type="ECO:0000269" key="2">
    <source>
    </source>
</evidence>
<evidence type="ECO:0000269" key="3">
    <source>
    </source>
</evidence>
<evidence type="ECO:0000303" key="4">
    <source>
    </source>
</evidence>
<evidence type="ECO:0000305" key="5"/>
<evidence type="ECO:0000312" key="6">
    <source>
        <dbReference type="EMBL" id="AAG06827.1"/>
    </source>
</evidence>
<evidence type="ECO:0007744" key="7">
    <source>
        <dbReference type="PDB" id="4AEY"/>
    </source>
</evidence>
<evidence type="ECO:0007829" key="8">
    <source>
        <dbReference type="PDB" id="4AEY"/>
    </source>
</evidence>
<reference key="1">
    <citation type="journal article" date="2000" name="Nature">
        <title>Complete genome sequence of Pseudomonas aeruginosa PAO1, an opportunistic pathogen.</title>
        <authorList>
            <person name="Stover C.K."/>
            <person name="Pham X.-Q.T."/>
            <person name="Erwin A.L."/>
            <person name="Mizoguchi S.D."/>
            <person name="Warrener P."/>
            <person name="Hickey M.J."/>
            <person name="Brinkman F.S.L."/>
            <person name="Hufnagle W.O."/>
            <person name="Kowalik D.J."/>
            <person name="Lagrou M."/>
            <person name="Garber R.L."/>
            <person name="Goltry L."/>
            <person name="Tolentino E."/>
            <person name="Westbrock-Wadman S."/>
            <person name="Yuan Y."/>
            <person name="Brody L.L."/>
            <person name="Coulter S.N."/>
            <person name="Folger K.R."/>
            <person name="Kas A."/>
            <person name="Larbig K."/>
            <person name="Lim R.M."/>
            <person name="Smith K.A."/>
            <person name="Spencer D.H."/>
            <person name="Wong G.K.-S."/>
            <person name="Wu Z."/>
            <person name="Paulsen I.T."/>
            <person name="Reizer J."/>
            <person name="Saier M.H. Jr."/>
            <person name="Hancock R.E.W."/>
            <person name="Lory S."/>
            <person name="Olson M.V."/>
        </authorList>
    </citation>
    <scope>NUCLEOTIDE SEQUENCE [LARGE SCALE GENOMIC DNA]</scope>
    <source>
        <strain>ATCC 15692 / DSM 22644 / CIP 104116 / JCM 14847 / LMG 12228 / 1C / PRS 101 / PAO1</strain>
    </source>
</reference>
<reference key="2">
    <citation type="journal article" date="2010" name="J. Bacteriol.">
        <title>FolX and FolM are essential for tetrahydromonapterin synthesis in Escherichia coli and Pseudomonas aeruginosa.</title>
        <authorList>
            <person name="Pribat A."/>
            <person name="Blaby I.K."/>
            <person name="Lara-Nunez A."/>
            <person name="Gregory J.F."/>
            <person name="de Crecy-Lagard V."/>
            <person name="Hanson A.D."/>
        </authorList>
    </citation>
    <scope>FUNCTION</scope>
    <scope>DISRUPTION PHENOTYPE</scope>
    <source>
        <strain>ATCC 15692 / DSM 22644 / CIP 104116 / JCM 14847 / LMG 12228 / 1C / PRS 101 / PAO1</strain>
    </source>
</reference>
<reference evidence="7" key="3">
    <citation type="journal article" date="2012" name="FEBS Lett.">
        <title>FolX from Pseudomonas aeruginosa is octameric in both crystal and solution.</title>
        <authorList>
            <person name="Gabrielsen M."/>
            <person name="Beckham K.S."/>
            <person name="Cogdell R.J."/>
            <person name="Byron O."/>
            <person name="Roe A.J."/>
        </authorList>
    </citation>
    <scope>X-RAY CRYSTALLOGRAPHY (3.00 ANGSTROMS)</scope>
    <scope>SUBUNIT</scope>
</reference>
<protein>
    <recommendedName>
        <fullName evidence="1">Dihydroneopterin triphosphate 2'-epimerase</fullName>
        <ecNumber evidence="1">5.1.99.7</ecNumber>
    </recommendedName>
    <alternativeName>
        <fullName evidence="1">D-erythro-7,8-dihydroneopterin triphosphate epimerase</fullName>
    </alternativeName>
</protein>
<name>FOLX_PSEAE</name>
<dbReference type="EC" id="5.1.99.7" evidence="1"/>
<dbReference type="EMBL" id="AE004091">
    <property type="protein sequence ID" value="AAG06827.1"/>
    <property type="molecule type" value="Genomic_DNA"/>
</dbReference>
<dbReference type="PIR" id="E83217">
    <property type="entry name" value="E83217"/>
</dbReference>
<dbReference type="RefSeq" id="NP_252129.1">
    <property type="nucleotide sequence ID" value="NC_002516.2"/>
</dbReference>
<dbReference type="RefSeq" id="WP_003091897.1">
    <property type="nucleotide sequence ID" value="NZ_QZGE01000037.1"/>
</dbReference>
<dbReference type="PDB" id="4AEY">
    <property type="method" value="X-ray"/>
    <property type="resolution" value="3.00 A"/>
    <property type="chains" value="A=1-123"/>
</dbReference>
<dbReference type="PDBsum" id="4AEY"/>
<dbReference type="SMR" id="Q9HYG7"/>
<dbReference type="FunCoup" id="Q9HYG7">
    <property type="interactions" value="45"/>
</dbReference>
<dbReference type="STRING" id="208964.PA3439"/>
<dbReference type="PaxDb" id="208964-PA3439"/>
<dbReference type="GeneID" id="877686"/>
<dbReference type="KEGG" id="pae:PA3439"/>
<dbReference type="PATRIC" id="fig|208964.12.peg.3600"/>
<dbReference type="PseudoCAP" id="PA3439"/>
<dbReference type="HOGENOM" id="CLU_112632_0_0_6"/>
<dbReference type="InParanoid" id="Q9HYG7"/>
<dbReference type="OrthoDB" id="1121389at2"/>
<dbReference type="PhylomeDB" id="Q9HYG7"/>
<dbReference type="BioCyc" id="PAER208964:G1FZ6-3506-MONOMER"/>
<dbReference type="BRENDA" id="5.1.99.7">
    <property type="organism ID" value="5087"/>
</dbReference>
<dbReference type="EvolutionaryTrace" id="Q9HYG7"/>
<dbReference type="Proteomes" id="UP000002438">
    <property type="component" value="Chromosome"/>
</dbReference>
<dbReference type="GO" id="GO:0005737">
    <property type="term" value="C:cytoplasm"/>
    <property type="evidence" value="ECO:0000318"/>
    <property type="project" value="GO_Central"/>
</dbReference>
<dbReference type="GO" id="GO:0005829">
    <property type="term" value="C:cytosol"/>
    <property type="evidence" value="ECO:0000318"/>
    <property type="project" value="GO_Central"/>
</dbReference>
<dbReference type="GO" id="GO:0004150">
    <property type="term" value="F:dihydroneopterin aldolase activity"/>
    <property type="evidence" value="ECO:0007669"/>
    <property type="project" value="InterPro"/>
</dbReference>
<dbReference type="GO" id="GO:0008719">
    <property type="term" value="F:dihydroneopterin triphosphate 2'-epimerase activity"/>
    <property type="evidence" value="ECO:0000318"/>
    <property type="project" value="GO_Central"/>
</dbReference>
<dbReference type="GO" id="GO:0006760">
    <property type="term" value="P:folic acid-containing compound metabolic process"/>
    <property type="evidence" value="ECO:0007669"/>
    <property type="project" value="InterPro"/>
</dbReference>
<dbReference type="GO" id="GO:0006729">
    <property type="term" value="P:tetrahydrobiopterin biosynthetic process"/>
    <property type="evidence" value="ECO:0000314"/>
    <property type="project" value="PseudoCAP"/>
</dbReference>
<dbReference type="CDD" id="cd00534">
    <property type="entry name" value="DHNA_DHNTPE"/>
    <property type="match status" value="1"/>
</dbReference>
<dbReference type="FunFam" id="3.30.1130.10:FF:000005">
    <property type="entry name" value="D-erythro-7,8-dihydroneopterin triphosphate epimerase"/>
    <property type="match status" value="1"/>
</dbReference>
<dbReference type="Gene3D" id="3.30.1130.10">
    <property type="match status" value="1"/>
</dbReference>
<dbReference type="InterPro" id="IPR006156">
    <property type="entry name" value="Dihydroneopterin_aldolase"/>
</dbReference>
<dbReference type="InterPro" id="IPR006157">
    <property type="entry name" value="FolB_dom"/>
</dbReference>
<dbReference type="InterPro" id="IPR043133">
    <property type="entry name" value="GTP-CH-I_C/QueF"/>
</dbReference>
<dbReference type="NCBIfam" id="TIGR00526">
    <property type="entry name" value="folB_dom"/>
    <property type="match status" value="1"/>
</dbReference>
<dbReference type="NCBIfam" id="NF008418">
    <property type="entry name" value="PRK11245.1"/>
    <property type="match status" value="1"/>
</dbReference>
<dbReference type="PANTHER" id="PTHR42844">
    <property type="entry name" value="DIHYDRONEOPTERIN ALDOLASE 1-RELATED"/>
    <property type="match status" value="1"/>
</dbReference>
<dbReference type="PANTHER" id="PTHR42844:SF10">
    <property type="entry name" value="DIHYDRONEOPTERIN TRIPHOSPHATE 2'-EPIMERASE"/>
    <property type="match status" value="1"/>
</dbReference>
<dbReference type="Pfam" id="PF02152">
    <property type="entry name" value="FolB"/>
    <property type="match status" value="1"/>
</dbReference>
<dbReference type="SMART" id="SM00905">
    <property type="entry name" value="FolB"/>
    <property type="match status" value="1"/>
</dbReference>
<dbReference type="SUPFAM" id="SSF55620">
    <property type="entry name" value="Tetrahydrobiopterin biosynthesis enzymes-like"/>
    <property type="match status" value="1"/>
</dbReference>
<keyword id="KW-0002">3D-structure</keyword>
<keyword id="KW-0413">Isomerase</keyword>
<keyword id="KW-1185">Reference proteome</keyword>
<proteinExistence type="evidence at protein level"/>